<proteinExistence type="evidence at protein level"/>
<name>AAT6_CAEEL</name>
<comment type="function">
    <text evidence="4 6">Amino acid transporter that mediates the uptake of the L-enantiomers of various amino acids, including L-glutamate (Probable). May play a role in promoting fertility (PubMed:30560135).</text>
</comment>
<comment type="subunit">
    <text evidence="3">Interacts (via PDZ-binding motif) with nfrl-1 (via PDZ 2 domain); the interaction with nrfl-1 is required to sequester aat-6 to the apical cell membrane of intestinal cells.</text>
</comment>
<comment type="interaction">
    <interactant intactId="EBI-21449230">
        <id>Q22397</id>
    </interactant>
    <interactant intactId="EBI-25423624">
        <id>G5EDM4-1</id>
        <label>nrfl-1</label>
    </interactant>
    <organismsDiffer>false</organismsDiffer>
    <experiments>2</experiments>
</comment>
<comment type="subcellular location">
    <subcellularLocation>
        <location evidence="3">Apical cell membrane</location>
        <topology evidence="1">Multi-pass membrane protein</topology>
    </subcellularLocation>
    <text evidence="3">Co-localizes with nrfl-1 at the apical cell membrane of intestinal cells.</text>
</comment>
<comment type="alternative products">
    <event type="alternative splicing"/>
    <isoform>
        <id>Q22397-1</id>
        <name evidence="8">a</name>
        <sequence type="displayed"/>
    </isoform>
    <isoform>
        <id>Q22397-2</id>
        <name evidence="9">b</name>
        <sequence type="described" ref="VSP_060386"/>
    </isoform>
</comment>
<comment type="tissue specificity">
    <text evidence="3">Expressed at the apical cell membrane of intestinal cells.</text>
</comment>
<comment type="similarity">
    <text evidence="5">Belongs to the amino acid-polyamine-organocation (APC) superfamily.</text>
</comment>
<dbReference type="EMBL" id="BX284605">
    <property type="protein sequence ID" value="CAA98529.2"/>
    <property type="molecule type" value="Genomic_DNA"/>
</dbReference>
<dbReference type="EMBL" id="BX284605">
    <property type="protein sequence ID" value="CAQ35057.1"/>
    <property type="molecule type" value="Genomic_DNA"/>
</dbReference>
<dbReference type="PIR" id="T24837">
    <property type="entry name" value="T24837"/>
</dbReference>
<dbReference type="RefSeq" id="NP_001123014.1">
    <molecule id="Q22397-2"/>
    <property type="nucleotide sequence ID" value="NM_001129542.4"/>
</dbReference>
<dbReference type="RefSeq" id="NP_505905.2">
    <molecule id="Q22397-1"/>
    <property type="nucleotide sequence ID" value="NM_073504.4"/>
</dbReference>
<dbReference type="SMR" id="Q22397"/>
<dbReference type="ComplexPortal" id="CPX-4311">
    <property type="entry name" value="nrfl-1-aat-6 complex"/>
</dbReference>
<dbReference type="FunCoup" id="Q22397">
    <property type="interactions" value="26"/>
</dbReference>
<dbReference type="IntAct" id="Q22397">
    <property type="interactions" value="1"/>
</dbReference>
<dbReference type="STRING" id="6239.T11F9.4a.1"/>
<dbReference type="TCDB" id="2.A.3.8.27">
    <property type="family name" value="the amino acid-polyamine-organocation (apc) family"/>
</dbReference>
<dbReference type="GlyCosmos" id="Q22397">
    <property type="glycosylation" value="2 sites, No reported glycans"/>
</dbReference>
<dbReference type="PaxDb" id="6239-T11F9.4a"/>
<dbReference type="EnsemblMetazoa" id="T11F9.4a.1">
    <molecule id="Q22397-1"/>
    <property type="protein sequence ID" value="T11F9.4a.1"/>
    <property type="gene ID" value="WBGene00000007"/>
</dbReference>
<dbReference type="EnsemblMetazoa" id="T11F9.4b.1">
    <molecule id="Q22397-2"/>
    <property type="protein sequence ID" value="T11F9.4b.1"/>
    <property type="gene ID" value="WBGene00000007"/>
</dbReference>
<dbReference type="GeneID" id="188421"/>
<dbReference type="KEGG" id="cel:CELE_T11F9.4"/>
<dbReference type="UCSC" id="T11F9.4a">
    <property type="organism name" value="c. elegans"/>
</dbReference>
<dbReference type="AGR" id="WB:WBGene00000007"/>
<dbReference type="CTD" id="188421"/>
<dbReference type="WormBase" id="T11F9.4a">
    <molecule id="Q22397-1"/>
    <property type="protein sequence ID" value="CE31995"/>
    <property type="gene ID" value="WBGene00000007"/>
    <property type="gene designation" value="aat-6"/>
</dbReference>
<dbReference type="WormBase" id="T11F9.4b">
    <molecule id="Q22397-2"/>
    <property type="protein sequence ID" value="CE42501"/>
    <property type="gene ID" value="WBGene00000007"/>
    <property type="gene designation" value="aat-6"/>
</dbReference>
<dbReference type="eggNOG" id="KOG1287">
    <property type="taxonomic scope" value="Eukaryota"/>
</dbReference>
<dbReference type="HOGENOM" id="CLU_007946_3_3_1"/>
<dbReference type="InParanoid" id="Q22397"/>
<dbReference type="OMA" id="VWLEFAC"/>
<dbReference type="OrthoDB" id="5829096at2759"/>
<dbReference type="PhylomeDB" id="Q22397"/>
<dbReference type="PRO" id="PR:Q22397"/>
<dbReference type="Proteomes" id="UP000001940">
    <property type="component" value="Chromosome V"/>
</dbReference>
<dbReference type="Bgee" id="WBGene00000007">
    <property type="expression patterns" value="Expressed in larva and 3 other cell types or tissues"/>
</dbReference>
<dbReference type="GO" id="GO:1990184">
    <property type="term" value="C:amino acid transport complex"/>
    <property type="evidence" value="ECO:0000303"/>
    <property type="project" value="ComplexPortal"/>
</dbReference>
<dbReference type="GO" id="GO:0016324">
    <property type="term" value="C:apical plasma membrane"/>
    <property type="evidence" value="ECO:0000314"/>
    <property type="project" value="UniProtKB"/>
</dbReference>
<dbReference type="GO" id="GO:0015179">
    <property type="term" value="F:L-amino acid transmembrane transporter activity"/>
    <property type="evidence" value="ECO:0000318"/>
    <property type="project" value="GO_Central"/>
</dbReference>
<dbReference type="GO" id="GO:0030165">
    <property type="term" value="F:PDZ domain binding"/>
    <property type="evidence" value="ECO:0000353"/>
    <property type="project" value="UniProtKB"/>
</dbReference>
<dbReference type="GO" id="GO:0003333">
    <property type="term" value="P:amino acid transmembrane transport"/>
    <property type="evidence" value="ECO:0000318"/>
    <property type="project" value="GO_Central"/>
</dbReference>
<dbReference type="GO" id="GO:0080144">
    <property type="term" value="P:intracellular amino acid homeostasis"/>
    <property type="evidence" value="ECO:0000303"/>
    <property type="project" value="ComplexPortal"/>
</dbReference>
<dbReference type="GO" id="GO:0015807">
    <property type="term" value="P:L-amino acid transport"/>
    <property type="evidence" value="ECO:0000303"/>
    <property type="project" value="ComplexPortal"/>
</dbReference>
<dbReference type="FunFam" id="1.20.1740.10:FF:000058">
    <property type="entry name" value="Amino Acid Transporter"/>
    <property type="match status" value="1"/>
</dbReference>
<dbReference type="Gene3D" id="1.20.1740.10">
    <property type="entry name" value="Amino acid/polyamine transporter I"/>
    <property type="match status" value="1"/>
</dbReference>
<dbReference type="InterPro" id="IPR002293">
    <property type="entry name" value="AA/rel_permease1"/>
</dbReference>
<dbReference type="InterPro" id="IPR050598">
    <property type="entry name" value="AminoAcid_Transporter"/>
</dbReference>
<dbReference type="PANTHER" id="PTHR11785">
    <property type="entry name" value="AMINO ACID TRANSPORTER"/>
    <property type="match status" value="1"/>
</dbReference>
<dbReference type="PANTHER" id="PTHR11785:SF523">
    <property type="entry name" value="AMINO ACID TRANSPORTER PROTEIN 6"/>
    <property type="match status" value="1"/>
</dbReference>
<dbReference type="Pfam" id="PF13520">
    <property type="entry name" value="AA_permease_2"/>
    <property type="match status" value="1"/>
</dbReference>
<dbReference type="PIRSF" id="PIRSF006060">
    <property type="entry name" value="AA_transporter"/>
    <property type="match status" value="1"/>
</dbReference>
<accession>Q22397</accession>
<accession>B2D6M4</accession>
<reference evidence="7" key="1">
    <citation type="journal article" date="1998" name="Science">
        <title>Genome sequence of the nematode C. elegans: a platform for investigating biology.</title>
        <authorList>
            <consortium name="The C. elegans sequencing consortium"/>
        </authorList>
    </citation>
    <scope>NUCLEOTIDE SEQUENCE [LARGE SCALE GENOMIC DNA]</scope>
    <source>
        <strain evidence="7">Bristol N2</strain>
    </source>
</reference>
<reference evidence="5" key="2">
    <citation type="journal article" date="2012" name="PLoS ONE">
        <title>NRFL-1, the C. elegans NHERF orthologue, interacts with amino acid transporter 6 (AAT-6) for age-dependent maintenance of AAT-6 on the membrane.</title>
        <authorList>
            <person name="Hagiwara K."/>
            <person name="Nagamori S."/>
            <person name="Umemura Y.M."/>
            <person name="Ohgaki R."/>
            <person name="Tanaka H."/>
            <person name="Murata D."/>
            <person name="Nakagomi S."/>
            <person name="Nomura K.H."/>
            <person name="Kage-Nakadai E."/>
            <person name="Mitani S."/>
            <person name="Nomura K."/>
            <person name="Kanai Y."/>
        </authorList>
    </citation>
    <scope>INTERACTION WITH NRFL-1</scope>
    <scope>SUBCELLULAR LOCATION</scope>
    <scope>TISSUE SPECIFICITY</scope>
    <scope>MUTAGENESIS OF 521-THR--MET-523</scope>
</reference>
<reference evidence="5" key="3">
    <citation type="journal article" date="2018" name="Front. Mol. Biosci.">
        <title>The Reproduction Rate of Peptide Transporter PEPT-1 Deficient C. elegans Is Dependent on Dietary Glutamate Supply.</title>
        <authorList>
            <person name="Spanier B."/>
            <person name="Wallwitz J."/>
            <person name="Zapoglou D."/>
            <person name="Idrissou B.M.G."/>
            <person name="Fischer C."/>
            <person name="Troll M."/>
            <person name="Petzold K."/>
            <person name="Daniel H."/>
        </authorList>
    </citation>
    <scope>FUNCTION</scope>
</reference>
<evidence type="ECO:0000255" key="1"/>
<evidence type="ECO:0000255" key="2">
    <source>
        <dbReference type="PROSITE-ProRule" id="PRU00498"/>
    </source>
</evidence>
<evidence type="ECO:0000269" key="3">
    <source>
    </source>
</evidence>
<evidence type="ECO:0000269" key="4">
    <source>
    </source>
</evidence>
<evidence type="ECO:0000305" key="5"/>
<evidence type="ECO:0000305" key="6">
    <source>
    </source>
</evidence>
<evidence type="ECO:0000312" key="7">
    <source>
        <dbReference type="Proteomes" id="UP000001940"/>
    </source>
</evidence>
<evidence type="ECO:0000312" key="8">
    <source>
        <dbReference type="WormBase" id="T11F9.4a"/>
    </source>
</evidence>
<evidence type="ECO:0000312" key="9">
    <source>
        <dbReference type="WormBase" id="T11F9.4b"/>
    </source>
</evidence>
<organism evidence="7">
    <name type="scientific">Caenorhabditis elegans</name>
    <dbReference type="NCBI Taxonomy" id="6239"/>
    <lineage>
        <taxon>Eukaryota</taxon>
        <taxon>Metazoa</taxon>
        <taxon>Ecdysozoa</taxon>
        <taxon>Nematoda</taxon>
        <taxon>Chromadorea</taxon>
        <taxon>Rhabditida</taxon>
        <taxon>Rhabditina</taxon>
        <taxon>Rhabditomorpha</taxon>
        <taxon>Rhabditoidea</taxon>
        <taxon>Rhabditidae</taxon>
        <taxon>Peloderinae</taxon>
        <taxon>Caenorhabditis</taxon>
    </lineage>
</organism>
<feature type="chain" id="PRO_0000448296" description="Amino acid transporter protein 6">
    <location>
        <begin position="1"/>
        <end position="523"/>
    </location>
</feature>
<feature type="topological domain" description="Cytoplasmic" evidence="5">
    <location>
        <begin position="1"/>
        <end position="19"/>
    </location>
</feature>
<feature type="transmembrane region" description="Helical; Name=1" evidence="1">
    <location>
        <begin position="20"/>
        <end position="40"/>
    </location>
</feature>
<feature type="topological domain" description="Extracellular" evidence="5">
    <location>
        <begin position="41"/>
        <end position="51"/>
    </location>
</feature>
<feature type="transmembrane region" description="Helical; Name=2" evidence="1">
    <location>
        <begin position="52"/>
        <end position="72"/>
    </location>
</feature>
<feature type="topological domain" description="Cytoplasmic" evidence="5">
    <location>
        <begin position="73"/>
        <end position="86"/>
    </location>
</feature>
<feature type="transmembrane region" description="Helical; Name=3" evidence="1">
    <location>
        <begin position="87"/>
        <end position="107"/>
    </location>
</feature>
<feature type="topological domain" description="Extracellular" evidence="5">
    <location>
        <begin position="108"/>
        <end position="145"/>
    </location>
</feature>
<feature type="transmembrane region" description="Helical; Name=4" evidence="1">
    <location>
        <begin position="146"/>
        <end position="166"/>
    </location>
</feature>
<feature type="topological domain" description="Cytoplasmic" evidence="5">
    <location>
        <begin position="167"/>
        <end position="173"/>
    </location>
</feature>
<feature type="transmembrane region" description="Helical; Name=5" evidence="1">
    <location>
        <begin position="174"/>
        <end position="194"/>
    </location>
</feature>
<feature type="topological domain" description="Extracellular" evidence="5">
    <location>
        <begin position="195"/>
        <end position="214"/>
    </location>
</feature>
<feature type="transmembrane region" description="Helical; Name=6" evidence="1">
    <location>
        <begin position="215"/>
        <end position="235"/>
    </location>
</feature>
<feature type="topological domain" description="Cytoplasmic" evidence="5">
    <location>
        <begin position="236"/>
        <end position="249"/>
    </location>
</feature>
<feature type="transmembrane region" description="Helical; Name=7" evidence="1">
    <location>
        <begin position="250"/>
        <end position="270"/>
    </location>
</feature>
<feature type="topological domain" description="Extracellular" evidence="5">
    <location>
        <begin position="271"/>
        <end position="290"/>
    </location>
</feature>
<feature type="transmembrane region" description="Helical; Name=8" evidence="1">
    <location>
        <begin position="291"/>
        <end position="311"/>
    </location>
</feature>
<feature type="topological domain" description="Cytoplasmic" evidence="5">
    <location>
        <begin position="312"/>
        <end position="348"/>
    </location>
</feature>
<feature type="transmembrane region" description="Helical; Name=9" evidence="1">
    <location>
        <begin position="349"/>
        <end position="369"/>
    </location>
</feature>
<feature type="topological domain" description="Extracellular" evidence="5">
    <location>
        <begin position="370"/>
        <end position="404"/>
    </location>
</feature>
<feature type="transmembrane region" description="Helical; Name=10" evidence="1">
    <location>
        <begin position="405"/>
        <end position="425"/>
    </location>
</feature>
<feature type="topological domain" description="Cytoplasmic" evidence="5">
    <location>
        <begin position="426"/>
        <end position="429"/>
    </location>
</feature>
<feature type="transmembrane region" description="Helical; Name=11" evidence="1">
    <location>
        <begin position="430"/>
        <end position="450"/>
    </location>
</feature>
<feature type="topological domain" description="Extracellular" evidence="5">
    <location>
        <begin position="451"/>
        <end position="523"/>
    </location>
</feature>
<feature type="short sequence motif" description="PDZ-binding motif" evidence="3">
    <location>
        <begin position="521"/>
        <end position="523"/>
    </location>
</feature>
<feature type="glycosylation site" description="N-linked (GlcNAc...) asparagine" evidence="2">
    <location>
        <position position="289"/>
    </location>
</feature>
<feature type="glycosylation site" description="N-linked (GlcNAc...) asparagine" evidence="2">
    <location>
        <position position="462"/>
    </location>
</feature>
<feature type="splice variant" id="VSP_060386" description="In isoform b." evidence="5">
    <location>
        <begin position="1"/>
        <end position="10"/>
    </location>
</feature>
<feature type="mutagenesis site" description="Abolishes the interaction with nrfl-1." evidence="3">
    <location>
        <begin position="521"/>
        <end position="523"/>
    </location>
</feature>
<keyword id="KW-0025">Alternative splicing</keyword>
<keyword id="KW-0029">Amino-acid transport</keyword>
<keyword id="KW-1003">Cell membrane</keyword>
<keyword id="KW-0325">Glycoprotein</keyword>
<keyword id="KW-0472">Membrane</keyword>
<keyword id="KW-1185">Reference proteome</keyword>
<keyword id="KW-0812">Transmembrane</keyword>
<keyword id="KW-1133">Transmembrane helix</keyword>
<keyword id="KW-0813">Transport</keyword>
<gene>
    <name evidence="8" type="primary">aat-6</name>
    <name evidence="8" type="ORF">T11F9.4</name>
</gene>
<sequence>MLNVFGVSASMPDDSRSQKMGLLGAISYIVGNIVGSGIFITPTSIIENVNSVGLSLAIWILAAFISMLGSFCYVELGTSIRLSGGDFAYLCFMKWYPVAFAFMCIGCTINYPATLAVQAQTFAEYVFRGAGVELDETSEFWAKKLLGFSLIILLMFMNFFSLKTFVQRFSILASLAKIAATLLIIITGFYYLIFKHWKQNLEEPFKGSNWNPGPFVNALFAGLFSYDGWDILNFGAEEIENPKRTMPLSIIIGMTCIGVIYVAVNVAYSIVLSPTEMIASNAVAIDFANKTLGAAAFVVPVMVAILLIGSLNSTMFSASRYLQAVSRQGHIPSAISGIAPNCDSPRVALLVHILIAIAVSFLGDPDKLINYVAFAQWSQRAFTMSALLYLRIRGRPRHPDRIQLPIIMPILFFLVCTSMVVISIIDDFKSSAVGLGILLGGLIIFIIFVWDRALPSSHTFRNATHVINEESTKFMQIIFNVVPERVGDEEMKNAIGGAESESEKVPAYKISPTGNGQFKCTRM</sequence>
<protein>
    <recommendedName>
        <fullName evidence="8">Amino acid transporter protein 6</fullName>
    </recommendedName>
</protein>